<organism>
    <name type="scientific">Alexandrium cohorticula</name>
    <name type="common">Dinoflagellate</name>
    <name type="synonym">Gonyaulax cohorticula</name>
    <dbReference type="NCBI Taxonomy" id="2928"/>
    <lineage>
        <taxon>Eukaryota</taxon>
        <taxon>Sar</taxon>
        <taxon>Alveolata</taxon>
        <taxon>Dinophyceae</taxon>
        <taxon>Gonyaulacales</taxon>
        <taxon>Pyrocystaceae</taxon>
        <taxon>Alexandrium</taxon>
    </lineage>
</organism>
<proteinExistence type="evidence at protein level"/>
<reference key="1">
    <citation type="journal article" date="1994" name="FEBS Lett.">
        <title>A novel peridinin-chlorophyll a protein (PCP) from the marine dinoflagellate Alexandrium cohorticula: a high pigment content and plural spectral forms of peridinin and chlorophyll a.</title>
        <authorList>
            <person name="Ogata T."/>
            <person name="Kodama M."/>
            <person name="Nomura S."/>
            <person name="Kobayashi M."/>
            <person name="Nozawa T."/>
            <person name="Katoh T."/>
            <person name="Mimuro M."/>
        </authorList>
    </citation>
    <scope>PROTEIN SEQUENCE</scope>
</reference>
<sequence length="49" mass="5296">DEIGDAAKKLGDASYAFAKEVDCNNGIFLQAPGKFQPLEALKXIXKHXV</sequence>
<accession>P51889</accession>
<keyword id="KW-0148">Chlorophyll</keyword>
<keyword id="KW-0150">Chloroplast</keyword>
<keyword id="KW-0157">Chromophore</keyword>
<keyword id="KW-0903">Direct protein sequencing</keyword>
<keyword id="KW-0437">Light-harvesting polypeptide</keyword>
<keyword id="KW-0934">Plastid</keyword>
<protein>
    <recommendedName>
        <fullName>Peridinin-chlorophyll a-binding protein</fullName>
        <shortName>PCP</shortName>
    </recommendedName>
</protein>
<name>PCP_ALECO</name>
<dbReference type="PIR" id="S51004">
    <property type="entry name" value="S51004"/>
</dbReference>
<dbReference type="GO" id="GO:0009507">
    <property type="term" value="C:chloroplast"/>
    <property type="evidence" value="ECO:0007669"/>
    <property type="project" value="UniProtKB-SubCell"/>
</dbReference>
<dbReference type="GO" id="GO:0030076">
    <property type="term" value="C:light-harvesting complex"/>
    <property type="evidence" value="ECO:0007669"/>
    <property type="project" value="UniProtKB-KW"/>
</dbReference>
<dbReference type="GO" id="GO:0016168">
    <property type="term" value="F:chlorophyll binding"/>
    <property type="evidence" value="ECO:0007669"/>
    <property type="project" value="UniProtKB-KW"/>
</dbReference>
<dbReference type="Gene3D" id="1.40.10.10">
    <property type="entry name" value="Peridinin-chlorophyll A binding"/>
    <property type="match status" value="1"/>
</dbReference>
<dbReference type="InterPro" id="IPR003376">
    <property type="entry name" value="Peridinin-chlorophyll-bd_prot"/>
</dbReference>
<dbReference type="InterPro" id="IPR036550">
    <property type="entry name" value="Peridinin-chlorophyll-bd_sf"/>
</dbReference>
<dbReference type="Pfam" id="PF02429">
    <property type="entry name" value="PCP"/>
    <property type="match status" value="1"/>
</dbReference>
<dbReference type="SUPFAM" id="SSF48608">
    <property type="entry name" value="Peridinin-chlorophyll protein"/>
    <property type="match status" value="1"/>
</dbReference>
<feature type="chain" id="PRO_0000058263" description="Peridinin-chlorophyll a-binding protein">
    <location>
        <begin position="1"/>
        <end position="49" status="greater than"/>
    </location>
</feature>
<feature type="non-terminal residue">
    <location>
        <position position="49"/>
    </location>
</feature>
<comment type="function">
    <text>Water-soluble antenna for capture of solar energy in the blue-green range. Peridinin is an asymmetric carotenoid.</text>
</comment>
<comment type="biophysicochemical properties">
    <absorption>
        <max>~480 nm</max>
    </absorption>
</comment>
<comment type="subunit">
    <text>Monomer.</text>
</comment>
<comment type="subcellular location">
    <subcellularLocation>
        <location>Plastid</location>
        <location>Chloroplast</location>
    </subcellularLocation>
</comment>
<comment type="PTM">
    <text>Binds 12 peridinin and 2 chlorophyll a molecules per monomer.</text>
</comment>